<gene>
    <name evidence="1" type="primary">tig</name>
    <name type="ordered locus">AHA_2010</name>
</gene>
<proteinExistence type="inferred from homology"/>
<evidence type="ECO:0000255" key="1">
    <source>
        <dbReference type="HAMAP-Rule" id="MF_00303"/>
    </source>
</evidence>
<protein>
    <recommendedName>
        <fullName evidence="1">Trigger factor</fullName>
        <shortName evidence="1">TF</shortName>
        <ecNumber evidence="1">5.2.1.8</ecNumber>
    </recommendedName>
    <alternativeName>
        <fullName evidence="1">PPIase</fullName>
    </alternativeName>
</protein>
<keyword id="KW-0131">Cell cycle</keyword>
<keyword id="KW-0132">Cell division</keyword>
<keyword id="KW-0143">Chaperone</keyword>
<keyword id="KW-0963">Cytoplasm</keyword>
<keyword id="KW-0413">Isomerase</keyword>
<keyword id="KW-1185">Reference proteome</keyword>
<keyword id="KW-0697">Rotamase</keyword>
<name>TIG_AERHH</name>
<accession>A0KJU0</accession>
<organism>
    <name type="scientific">Aeromonas hydrophila subsp. hydrophila (strain ATCC 7966 / DSM 30187 / BCRC 13018 / CCUG 14551 / JCM 1027 / KCTC 2358 / NCIMB 9240 / NCTC 8049)</name>
    <dbReference type="NCBI Taxonomy" id="380703"/>
    <lineage>
        <taxon>Bacteria</taxon>
        <taxon>Pseudomonadati</taxon>
        <taxon>Pseudomonadota</taxon>
        <taxon>Gammaproteobacteria</taxon>
        <taxon>Aeromonadales</taxon>
        <taxon>Aeromonadaceae</taxon>
        <taxon>Aeromonas</taxon>
    </lineage>
</organism>
<comment type="function">
    <text evidence="1">Involved in protein export. Acts as a chaperone by maintaining the newly synthesized protein in an open conformation. Functions as a peptidyl-prolyl cis-trans isomerase.</text>
</comment>
<comment type="catalytic activity">
    <reaction evidence="1">
        <text>[protein]-peptidylproline (omega=180) = [protein]-peptidylproline (omega=0)</text>
        <dbReference type="Rhea" id="RHEA:16237"/>
        <dbReference type="Rhea" id="RHEA-COMP:10747"/>
        <dbReference type="Rhea" id="RHEA-COMP:10748"/>
        <dbReference type="ChEBI" id="CHEBI:83833"/>
        <dbReference type="ChEBI" id="CHEBI:83834"/>
        <dbReference type="EC" id="5.2.1.8"/>
    </reaction>
</comment>
<comment type="subcellular location">
    <subcellularLocation>
        <location>Cytoplasm</location>
    </subcellularLocation>
    <text evidence="1">About half TF is bound to the ribosome near the polypeptide exit tunnel while the other half is free in the cytoplasm.</text>
</comment>
<comment type="domain">
    <text evidence="1">Consists of 3 domains; the N-terminus binds the ribosome, the middle domain has PPIase activity, while the C-terminus has intrinsic chaperone activity on its own.</text>
</comment>
<comment type="similarity">
    <text evidence="1">Belongs to the FKBP-type PPIase family. Tig subfamily.</text>
</comment>
<sequence length="436" mass="47820">MQVSVETTQGLERRLTITVPAATVDAAVRKELNGLAKTRRIDGFRPGKAPVAIIKKMFGAMAHARVADEMMQSNFIKAIIENKLSPAGAPTMDPKEIQEGQDFEFTATFEVYPEFEVAGLETIKVEKPVATVKDEDLGNMIDTLRKQHATWSEVDAAAADGMRVTMDFVGSIDGEEFDGGKAEGFNLVLGAGRMIPGFEDAIMGKKAGDEFTIDVTFPADYHAENLKGKAAKFASKLNKVEEQILPELTEEFVKRFGIESGNVEELKAEVRKNMERELAQALKNSVKEQVLNGLVEANQIDLPKAAVAQEIDALRQQALQRFGGFQGGNAPELPAELFQGQAERRVRVGLLLGDVIRTNEIKADEARVNSIIESMATAYEDPKEVIEYYQKNEQMLNGVRNLAVEDQAIDLILSKAQVTEKEVAFDEVINKSGAAA</sequence>
<feature type="chain" id="PRO_1000022639" description="Trigger factor">
    <location>
        <begin position="1"/>
        <end position="436"/>
    </location>
</feature>
<feature type="domain" description="PPIase FKBP-type" evidence="1">
    <location>
        <begin position="161"/>
        <end position="246"/>
    </location>
</feature>
<dbReference type="EC" id="5.2.1.8" evidence="1"/>
<dbReference type="EMBL" id="CP000462">
    <property type="protein sequence ID" value="ABK37180.1"/>
    <property type="molecule type" value="Genomic_DNA"/>
</dbReference>
<dbReference type="RefSeq" id="WP_011705880.1">
    <property type="nucleotide sequence ID" value="NC_008570.1"/>
</dbReference>
<dbReference type="RefSeq" id="YP_856541.1">
    <property type="nucleotide sequence ID" value="NC_008570.1"/>
</dbReference>
<dbReference type="SMR" id="A0KJU0"/>
<dbReference type="STRING" id="380703.AHA_2010"/>
<dbReference type="EnsemblBacteria" id="ABK37180">
    <property type="protein sequence ID" value="ABK37180"/>
    <property type="gene ID" value="AHA_2010"/>
</dbReference>
<dbReference type="GeneID" id="4489243"/>
<dbReference type="KEGG" id="aha:AHA_2010"/>
<dbReference type="PATRIC" id="fig|380703.7.peg.2031"/>
<dbReference type="eggNOG" id="COG0544">
    <property type="taxonomic scope" value="Bacteria"/>
</dbReference>
<dbReference type="HOGENOM" id="CLU_033058_2_0_6"/>
<dbReference type="OrthoDB" id="9767721at2"/>
<dbReference type="Proteomes" id="UP000000756">
    <property type="component" value="Chromosome"/>
</dbReference>
<dbReference type="GO" id="GO:0005737">
    <property type="term" value="C:cytoplasm"/>
    <property type="evidence" value="ECO:0007669"/>
    <property type="project" value="UniProtKB-SubCell"/>
</dbReference>
<dbReference type="GO" id="GO:0003755">
    <property type="term" value="F:peptidyl-prolyl cis-trans isomerase activity"/>
    <property type="evidence" value="ECO:0007669"/>
    <property type="project" value="UniProtKB-UniRule"/>
</dbReference>
<dbReference type="GO" id="GO:0044183">
    <property type="term" value="F:protein folding chaperone"/>
    <property type="evidence" value="ECO:0007669"/>
    <property type="project" value="TreeGrafter"/>
</dbReference>
<dbReference type="GO" id="GO:0043022">
    <property type="term" value="F:ribosome binding"/>
    <property type="evidence" value="ECO:0007669"/>
    <property type="project" value="TreeGrafter"/>
</dbReference>
<dbReference type="GO" id="GO:0051083">
    <property type="term" value="P:'de novo' cotranslational protein folding"/>
    <property type="evidence" value="ECO:0007669"/>
    <property type="project" value="TreeGrafter"/>
</dbReference>
<dbReference type="GO" id="GO:0051301">
    <property type="term" value="P:cell division"/>
    <property type="evidence" value="ECO:0007669"/>
    <property type="project" value="UniProtKB-KW"/>
</dbReference>
<dbReference type="GO" id="GO:0061077">
    <property type="term" value="P:chaperone-mediated protein folding"/>
    <property type="evidence" value="ECO:0007669"/>
    <property type="project" value="TreeGrafter"/>
</dbReference>
<dbReference type="GO" id="GO:0015031">
    <property type="term" value="P:protein transport"/>
    <property type="evidence" value="ECO:0007669"/>
    <property type="project" value="UniProtKB-UniRule"/>
</dbReference>
<dbReference type="GO" id="GO:0043335">
    <property type="term" value="P:protein unfolding"/>
    <property type="evidence" value="ECO:0007669"/>
    <property type="project" value="TreeGrafter"/>
</dbReference>
<dbReference type="FunFam" id="3.10.50.40:FF:000001">
    <property type="entry name" value="Trigger factor"/>
    <property type="match status" value="1"/>
</dbReference>
<dbReference type="Gene3D" id="3.10.50.40">
    <property type="match status" value="1"/>
</dbReference>
<dbReference type="Gene3D" id="3.30.70.1050">
    <property type="entry name" value="Trigger factor ribosome-binding domain"/>
    <property type="match status" value="1"/>
</dbReference>
<dbReference type="Gene3D" id="1.10.3120.10">
    <property type="entry name" value="Trigger factor, C-terminal domain"/>
    <property type="match status" value="1"/>
</dbReference>
<dbReference type="HAMAP" id="MF_00303">
    <property type="entry name" value="Trigger_factor_Tig"/>
    <property type="match status" value="1"/>
</dbReference>
<dbReference type="InterPro" id="IPR046357">
    <property type="entry name" value="PPIase_dom_sf"/>
</dbReference>
<dbReference type="InterPro" id="IPR001179">
    <property type="entry name" value="PPIase_FKBP_dom"/>
</dbReference>
<dbReference type="InterPro" id="IPR005215">
    <property type="entry name" value="Trig_fac"/>
</dbReference>
<dbReference type="InterPro" id="IPR008880">
    <property type="entry name" value="Trigger_fac_C"/>
</dbReference>
<dbReference type="InterPro" id="IPR037041">
    <property type="entry name" value="Trigger_fac_C_sf"/>
</dbReference>
<dbReference type="InterPro" id="IPR008881">
    <property type="entry name" value="Trigger_fac_ribosome-bd_bac"/>
</dbReference>
<dbReference type="InterPro" id="IPR036611">
    <property type="entry name" value="Trigger_fac_ribosome-bd_sf"/>
</dbReference>
<dbReference type="InterPro" id="IPR027304">
    <property type="entry name" value="Trigger_fact/SurA_dom_sf"/>
</dbReference>
<dbReference type="NCBIfam" id="TIGR00115">
    <property type="entry name" value="tig"/>
    <property type="match status" value="1"/>
</dbReference>
<dbReference type="PANTHER" id="PTHR30560">
    <property type="entry name" value="TRIGGER FACTOR CHAPERONE AND PEPTIDYL-PROLYL CIS/TRANS ISOMERASE"/>
    <property type="match status" value="1"/>
</dbReference>
<dbReference type="PANTHER" id="PTHR30560:SF3">
    <property type="entry name" value="TRIGGER FACTOR-LIKE PROTEIN TIG, CHLOROPLASTIC"/>
    <property type="match status" value="1"/>
</dbReference>
<dbReference type="Pfam" id="PF00254">
    <property type="entry name" value="FKBP_C"/>
    <property type="match status" value="1"/>
</dbReference>
<dbReference type="Pfam" id="PF05698">
    <property type="entry name" value="Trigger_C"/>
    <property type="match status" value="1"/>
</dbReference>
<dbReference type="Pfam" id="PF05697">
    <property type="entry name" value="Trigger_N"/>
    <property type="match status" value="1"/>
</dbReference>
<dbReference type="PIRSF" id="PIRSF003095">
    <property type="entry name" value="Trigger_factor"/>
    <property type="match status" value="1"/>
</dbReference>
<dbReference type="SUPFAM" id="SSF54534">
    <property type="entry name" value="FKBP-like"/>
    <property type="match status" value="1"/>
</dbReference>
<dbReference type="SUPFAM" id="SSF109998">
    <property type="entry name" value="Triger factor/SurA peptide-binding domain-like"/>
    <property type="match status" value="1"/>
</dbReference>
<dbReference type="SUPFAM" id="SSF102735">
    <property type="entry name" value="Trigger factor ribosome-binding domain"/>
    <property type="match status" value="1"/>
</dbReference>
<dbReference type="PROSITE" id="PS50059">
    <property type="entry name" value="FKBP_PPIASE"/>
    <property type="match status" value="1"/>
</dbReference>
<reference key="1">
    <citation type="journal article" date="2006" name="J. Bacteriol.">
        <title>Genome sequence of Aeromonas hydrophila ATCC 7966T: jack of all trades.</title>
        <authorList>
            <person name="Seshadri R."/>
            <person name="Joseph S.W."/>
            <person name="Chopra A.K."/>
            <person name="Sha J."/>
            <person name="Shaw J."/>
            <person name="Graf J."/>
            <person name="Haft D.H."/>
            <person name="Wu M."/>
            <person name="Ren Q."/>
            <person name="Rosovitz M.J."/>
            <person name="Madupu R."/>
            <person name="Tallon L."/>
            <person name="Kim M."/>
            <person name="Jin S."/>
            <person name="Vuong H."/>
            <person name="Stine O.C."/>
            <person name="Ali A."/>
            <person name="Horneman A.J."/>
            <person name="Heidelberg J.F."/>
        </authorList>
    </citation>
    <scope>NUCLEOTIDE SEQUENCE [LARGE SCALE GENOMIC DNA]</scope>
    <source>
        <strain>ATCC 7966 / DSM 30187 / BCRC 13018 / CCUG 14551 / JCM 1027 / KCTC 2358 / NCIMB 9240 / NCTC 8049</strain>
    </source>
</reference>